<reference key="1">
    <citation type="journal article" date="1991" name="Virology">
        <title>The sequences of the ribonucleotide reductase genes from African swine fever virus show considerable homology with those of the orthopoxvirus, vaccinia virus.</title>
        <authorList>
            <person name="Boursnell M."/>
            <person name="Shaw K."/>
            <person name="Yanez R.J."/>
            <person name="Vinuela E."/>
            <person name="Dixon L."/>
        </authorList>
    </citation>
    <scope>NUCLEOTIDE SEQUENCE [GENOMIC DNA]</scope>
</reference>
<reference key="2">
    <citation type="submission" date="2003-03" db="EMBL/GenBank/DDBJ databases">
        <title>African swine fever virus genomes.</title>
        <authorList>
            <person name="Kutish G.F."/>
            <person name="Rock D.L."/>
        </authorList>
    </citation>
    <scope>NUCLEOTIDE SEQUENCE [LARGE SCALE GENOMIC DNA]</scope>
</reference>
<gene>
    <name type="ordered locus">Mal-052</name>
</gene>
<protein>
    <recommendedName>
        <fullName>Ribonucleoside-diphosphate reductase small chain</fullName>
        <ecNumber>1.17.4.1</ecNumber>
    </recommendedName>
    <alternativeName>
        <fullName>Ribonucleotide reductase small subunit</fullName>
    </alternativeName>
</protein>
<sequence>MEELLIENSQRFTIFPIQHPECWNWYKKLESMTWTAQEVDMCKDIDDWEAMPKPQREFYKQILAFFVVADEIVIENLLTNFMREIKVKEVLYFYTMQAAQECVHSEAYSIQVKTLIPDEKEQQRIFSGIEKHPIIKKMAQWVRQWMDPARNSLGERLVGFAAVEGILFQNHFVAIQFLKEQNIMPGLVSYNEFISRDEGMHCSFACFLISNYVYNIPEEKIIHKILKEAVELVDEFINYAFDKARGRVPGFSKEMLFQYIRYFTDNLCFMMQCKSIYNVGNPFPQMTKFFLNEVEKTNFFELRPTQYQNCVKDDAFAFKLFLDDDDF</sequence>
<comment type="function">
    <text evidence="1">Ribonucleoside-diphosphate reductase holoenzyme provides the precursors necessary for viral DNA synthesis. Allows virus growth in non-dividing cells. Catalyzes the biosynthesis of deoxyribonucleotides from the corresponding ribonucleotides (By similarity).</text>
</comment>
<comment type="catalytic activity">
    <reaction evidence="2">
        <text>a 2'-deoxyribonucleoside 5'-diphosphate + [thioredoxin]-disulfide + H2O = a ribonucleoside 5'-diphosphate + [thioredoxin]-dithiol</text>
        <dbReference type="Rhea" id="RHEA:23252"/>
        <dbReference type="Rhea" id="RHEA-COMP:10698"/>
        <dbReference type="Rhea" id="RHEA-COMP:10700"/>
        <dbReference type="ChEBI" id="CHEBI:15377"/>
        <dbReference type="ChEBI" id="CHEBI:29950"/>
        <dbReference type="ChEBI" id="CHEBI:50058"/>
        <dbReference type="ChEBI" id="CHEBI:57930"/>
        <dbReference type="ChEBI" id="CHEBI:73316"/>
        <dbReference type="EC" id="1.17.4.1"/>
    </reaction>
</comment>
<comment type="cofactor">
    <cofactor evidence="1">
        <name>Fe cation</name>
        <dbReference type="ChEBI" id="CHEBI:24875"/>
    </cofactor>
    <text evidence="1">Binds 2 iron ions per subunit.</text>
</comment>
<comment type="subunit">
    <text evidence="1">Heterotetramer composed of a homodimer of the large subunit (R1) and a homodimer of the small subunit (R2). Larger multisubunit protein complex are also active, composed of (R1)n(R2)n (By similarity).</text>
</comment>
<comment type="induction">
    <text evidence="3">Expressed in the early phase of the viral replicative cycle.</text>
</comment>
<comment type="similarity">
    <text evidence="3">Belongs to the ribonucleoside diphosphate reductase small chain family.</text>
</comment>
<dbReference type="EC" id="1.17.4.1"/>
<dbReference type="EMBL" id="M64728">
    <property type="status" value="NOT_ANNOTATED_CDS"/>
    <property type="molecule type" value="Genomic_DNA"/>
</dbReference>
<dbReference type="EMBL" id="AY261361">
    <property type="status" value="NOT_ANNOTATED_CDS"/>
    <property type="molecule type" value="Genomic_DNA"/>
</dbReference>
<dbReference type="PIR" id="B40568">
    <property type="entry name" value="RDVZAS"/>
</dbReference>
<dbReference type="SMR" id="P26713"/>
<dbReference type="Proteomes" id="UP000000860">
    <property type="component" value="Segment"/>
</dbReference>
<dbReference type="GO" id="GO:0046872">
    <property type="term" value="F:metal ion binding"/>
    <property type="evidence" value="ECO:0007669"/>
    <property type="project" value="UniProtKB-KW"/>
</dbReference>
<dbReference type="GO" id="GO:0004748">
    <property type="term" value="F:ribonucleoside-diphosphate reductase activity, thioredoxin disulfide as acceptor"/>
    <property type="evidence" value="ECO:0007669"/>
    <property type="project" value="UniProtKB-EC"/>
</dbReference>
<dbReference type="GO" id="GO:0009263">
    <property type="term" value="P:deoxyribonucleotide biosynthetic process"/>
    <property type="evidence" value="ECO:0007669"/>
    <property type="project" value="UniProtKB-KW"/>
</dbReference>
<dbReference type="CDD" id="cd01049">
    <property type="entry name" value="RNRR2"/>
    <property type="match status" value="1"/>
</dbReference>
<dbReference type="Gene3D" id="1.10.620.20">
    <property type="entry name" value="Ribonucleotide Reductase, subunit A"/>
    <property type="match status" value="1"/>
</dbReference>
<dbReference type="InterPro" id="IPR009078">
    <property type="entry name" value="Ferritin-like_SF"/>
</dbReference>
<dbReference type="InterPro" id="IPR012348">
    <property type="entry name" value="RNR-like"/>
</dbReference>
<dbReference type="InterPro" id="IPR033909">
    <property type="entry name" value="RNR_small"/>
</dbReference>
<dbReference type="InterPro" id="IPR030475">
    <property type="entry name" value="RNR_small_AS"/>
</dbReference>
<dbReference type="InterPro" id="IPR000358">
    <property type="entry name" value="RNR_small_fam"/>
</dbReference>
<dbReference type="PANTHER" id="PTHR23409">
    <property type="entry name" value="RIBONUCLEOSIDE-DIPHOSPHATE REDUCTASE SMALL CHAIN"/>
    <property type="match status" value="1"/>
</dbReference>
<dbReference type="PANTHER" id="PTHR23409:SF18">
    <property type="entry name" value="RIBONUCLEOSIDE-DIPHOSPHATE REDUCTASE SUBUNIT M2"/>
    <property type="match status" value="1"/>
</dbReference>
<dbReference type="Pfam" id="PF00268">
    <property type="entry name" value="Ribonuc_red_sm"/>
    <property type="match status" value="1"/>
</dbReference>
<dbReference type="SUPFAM" id="SSF47240">
    <property type="entry name" value="Ferritin-like"/>
    <property type="match status" value="1"/>
</dbReference>
<dbReference type="PROSITE" id="PS00368">
    <property type="entry name" value="RIBORED_SMALL"/>
    <property type="match status" value="1"/>
</dbReference>
<feature type="chain" id="PRO_0000190492" description="Ribonucleoside-diphosphate reductase small chain">
    <location>
        <begin position="1"/>
        <end position="327"/>
    </location>
</feature>
<feature type="active site" evidence="2">
    <location>
        <position position="108"/>
    </location>
</feature>
<feature type="binding site" evidence="2">
    <location>
        <position position="70"/>
    </location>
    <ligand>
        <name>Fe cation</name>
        <dbReference type="ChEBI" id="CHEBI:24875"/>
        <label>1</label>
    </ligand>
</feature>
<feature type="binding site" evidence="2">
    <location>
        <position position="101"/>
    </location>
    <ligand>
        <name>Fe cation</name>
        <dbReference type="ChEBI" id="CHEBI:24875"/>
        <label>1</label>
    </ligand>
</feature>
<feature type="binding site" evidence="1">
    <location>
        <position position="101"/>
    </location>
    <ligand>
        <name>Fe cation</name>
        <dbReference type="ChEBI" id="CHEBI:24875"/>
        <label>2</label>
    </ligand>
</feature>
<feature type="binding site" evidence="2">
    <location>
        <position position="104"/>
    </location>
    <ligand>
        <name>Fe cation</name>
        <dbReference type="ChEBI" id="CHEBI:24875"/>
        <label>1</label>
    </ligand>
</feature>
<feature type="binding site" evidence="1">
    <location>
        <position position="164"/>
    </location>
    <ligand>
        <name>Fe cation</name>
        <dbReference type="ChEBI" id="CHEBI:24875"/>
        <label>2</label>
    </ligand>
</feature>
<feature type="binding site" evidence="1">
    <location>
        <position position="198"/>
    </location>
    <ligand>
        <name>Fe cation</name>
        <dbReference type="ChEBI" id="CHEBI:24875"/>
        <label>2</label>
    </ligand>
</feature>
<feature type="binding site" evidence="1">
    <location>
        <position position="201"/>
    </location>
    <ligand>
        <name>Fe cation</name>
        <dbReference type="ChEBI" id="CHEBI:24875"/>
        <label>2</label>
    </ligand>
</feature>
<keyword id="KW-0215">Deoxyribonucleotide synthesis</keyword>
<keyword id="KW-0244">Early protein</keyword>
<keyword id="KW-0408">Iron</keyword>
<keyword id="KW-0479">Metal-binding</keyword>
<keyword id="KW-0560">Oxidoreductase</keyword>
<name>RIR2_ASFM2</name>
<organism>
    <name type="scientific">African swine fever virus (isolate Tick/Malawi/Lil 20-1/1983)</name>
    <name type="common">ASFV</name>
    <dbReference type="NCBI Taxonomy" id="10500"/>
    <lineage>
        <taxon>Viruses</taxon>
        <taxon>Varidnaviria</taxon>
        <taxon>Bamfordvirae</taxon>
        <taxon>Nucleocytoviricota</taxon>
        <taxon>Pokkesviricetes</taxon>
        <taxon>Asfuvirales</taxon>
        <taxon>Asfarviridae</taxon>
        <taxon>Asfivirus</taxon>
        <taxon>African swine fever virus</taxon>
    </lineage>
</organism>
<proteinExistence type="inferred from homology"/>
<evidence type="ECO:0000250" key="1"/>
<evidence type="ECO:0000255" key="2">
    <source>
        <dbReference type="PROSITE-ProRule" id="PRU10014"/>
    </source>
</evidence>
<evidence type="ECO:0000305" key="3"/>
<organismHost>
    <name type="scientific">Ornithodoros</name>
    <name type="common">relapsing fever ticks</name>
    <dbReference type="NCBI Taxonomy" id="6937"/>
</organismHost>
<organismHost>
    <name type="scientific">Phacochoerus aethiopicus</name>
    <name type="common">Warthog</name>
    <dbReference type="NCBI Taxonomy" id="85517"/>
</organismHost>
<organismHost>
    <name type="scientific">Phacochoerus africanus</name>
    <name type="common">Warthog</name>
    <dbReference type="NCBI Taxonomy" id="41426"/>
</organismHost>
<organismHost>
    <name type="scientific">Potamochoerus larvatus</name>
    <name type="common">Bushpig</name>
    <dbReference type="NCBI Taxonomy" id="273792"/>
</organismHost>
<organismHost>
    <name type="scientific">Sus scrofa</name>
    <name type="common">Pig</name>
    <dbReference type="NCBI Taxonomy" id="9823"/>
</organismHost>
<accession>P26713</accession>